<sequence length="348" mass="37651">MGRNIKIIKKNLAFLNDFSPGILACLIISVLAYGLEILEKQLFGQAWLESLVLAILLGSITGSCFTLPKYFQKGITFCAKTLLEIAIVLLGASISVNAVLSAGWNLLASIIFVIFVTLILSFTIGRLFGLSSHLAMLVACGNAICGNSAIVAVAPVIKAKHEEVASSIAFTALLGVLIILFLPFLHPFLNLSFSQYGVLSGMVVYAVPQVLAATASVSFVSVQIATVVKLVRVLMLGPLIFALSILYHRSAQTRLRLHTLVPWFIIGFIFMMLIRSSNLIPEKTLIPIRFIAQLFTVISMAALGLGVDIRSLKKAGWRVILASTCSILILGVCSLIMIQLNDLNPIMF</sequence>
<keyword id="KW-1003">Cell membrane</keyword>
<keyword id="KW-0472">Membrane</keyword>
<keyword id="KW-0812">Transmembrane</keyword>
<keyword id="KW-1133">Transmembrane helix</keyword>
<comment type="subcellular location">
    <subcellularLocation>
        <location evidence="2">Cell membrane</location>
        <topology evidence="2">Multi-pass membrane protein</topology>
    </subcellularLocation>
</comment>
<comment type="similarity">
    <text evidence="2">Belongs to the UPF0324 family.</text>
</comment>
<proteinExistence type="inferred from homology"/>
<accession>Q6G4V3</accession>
<organism>
    <name type="scientific">Bartonella henselae (strain ATCC 49882 / DSM 28221 / CCUG 30454 / Houston 1)</name>
    <name type="common">Rochalimaea henselae</name>
    <dbReference type="NCBI Taxonomy" id="283166"/>
    <lineage>
        <taxon>Bacteria</taxon>
        <taxon>Pseudomonadati</taxon>
        <taxon>Pseudomonadota</taxon>
        <taxon>Alphaproteobacteria</taxon>
        <taxon>Hyphomicrobiales</taxon>
        <taxon>Bartonellaceae</taxon>
        <taxon>Bartonella</taxon>
    </lineage>
</organism>
<name>Y229_BARHE</name>
<gene>
    <name type="ordered locus">BH02290</name>
</gene>
<protein>
    <recommendedName>
        <fullName>UPF0324 membrane protein BH02290</fullName>
    </recommendedName>
</protein>
<evidence type="ECO:0000255" key="1"/>
<evidence type="ECO:0000305" key="2"/>
<reference key="1">
    <citation type="journal article" date="2004" name="Proc. Natl. Acad. Sci. U.S.A.">
        <title>The louse-borne human pathogen Bartonella quintana is a genomic derivative of the zoonotic agent Bartonella henselae.</title>
        <authorList>
            <person name="Alsmark U.C.M."/>
            <person name="Frank A.C."/>
            <person name="Karlberg E.O."/>
            <person name="Legault B.-A."/>
            <person name="Ardell D.H."/>
            <person name="Canbaeck B."/>
            <person name="Eriksson A.-S."/>
            <person name="Naeslund A.K."/>
            <person name="Handley S.A."/>
            <person name="Huvet M."/>
            <person name="La Scola B."/>
            <person name="Holmberg M."/>
            <person name="Andersson S.G.E."/>
        </authorList>
    </citation>
    <scope>NUCLEOTIDE SEQUENCE [LARGE SCALE GENOMIC DNA]</scope>
    <source>
        <strain>ATCC 49882 / DSM 28221 / CCUG 30454 / Houston 1</strain>
    </source>
</reference>
<feature type="chain" id="PRO_0000157394" description="UPF0324 membrane protein BH02290">
    <location>
        <begin position="1"/>
        <end position="348"/>
    </location>
</feature>
<feature type="transmembrane region" description="Helical" evidence="1">
    <location>
        <begin position="13"/>
        <end position="35"/>
    </location>
</feature>
<feature type="transmembrane region" description="Helical" evidence="1">
    <location>
        <begin position="45"/>
        <end position="67"/>
    </location>
</feature>
<feature type="transmembrane region" description="Helical" evidence="1">
    <location>
        <begin position="74"/>
        <end position="96"/>
    </location>
</feature>
<feature type="transmembrane region" description="Helical" evidence="1">
    <location>
        <begin position="106"/>
        <end position="128"/>
    </location>
</feature>
<feature type="transmembrane region" description="Helical" evidence="1">
    <location>
        <begin position="135"/>
        <end position="157"/>
    </location>
</feature>
<feature type="transmembrane region" description="Helical" evidence="1">
    <location>
        <begin position="167"/>
        <end position="189"/>
    </location>
</feature>
<feature type="transmembrane region" description="Helical" evidence="1">
    <location>
        <begin position="196"/>
        <end position="218"/>
    </location>
</feature>
<feature type="transmembrane region" description="Helical" evidence="1">
    <location>
        <begin position="223"/>
        <end position="245"/>
    </location>
</feature>
<feature type="transmembrane region" description="Helical" evidence="1">
    <location>
        <begin position="257"/>
        <end position="275"/>
    </location>
</feature>
<feature type="transmembrane region" description="Helical" evidence="1">
    <location>
        <begin position="285"/>
        <end position="307"/>
    </location>
</feature>
<feature type="transmembrane region" description="Helical" evidence="1">
    <location>
        <begin position="319"/>
        <end position="341"/>
    </location>
</feature>
<dbReference type="EMBL" id="BX897699">
    <property type="protein sequence ID" value="CAF27041.1"/>
    <property type="molecule type" value="Genomic_DNA"/>
</dbReference>
<dbReference type="PaxDb" id="283166-BH02290"/>
<dbReference type="EnsemblBacteria" id="CAF27041">
    <property type="protein sequence ID" value="CAF27041"/>
    <property type="gene ID" value="BH02290"/>
</dbReference>
<dbReference type="KEGG" id="bhe:BH02290"/>
<dbReference type="eggNOG" id="COG2855">
    <property type="taxonomic scope" value="Bacteria"/>
</dbReference>
<dbReference type="Proteomes" id="UP000000421">
    <property type="component" value="Chromosome"/>
</dbReference>
<dbReference type="GO" id="GO:0005886">
    <property type="term" value="C:plasma membrane"/>
    <property type="evidence" value="ECO:0007669"/>
    <property type="project" value="UniProtKB-SubCell"/>
</dbReference>
<dbReference type="InterPro" id="IPR018383">
    <property type="entry name" value="UPF0324_pro"/>
</dbReference>
<dbReference type="PANTHER" id="PTHR30106">
    <property type="entry name" value="INNER MEMBRANE PROTEIN YEIH-RELATED"/>
    <property type="match status" value="1"/>
</dbReference>
<dbReference type="PANTHER" id="PTHR30106:SF2">
    <property type="entry name" value="UPF0324 INNER MEMBRANE PROTEIN YEIH"/>
    <property type="match status" value="1"/>
</dbReference>
<dbReference type="Pfam" id="PF03601">
    <property type="entry name" value="Cons_hypoth698"/>
    <property type="match status" value="1"/>
</dbReference>